<comment type="function">
    <text evidence="1">Forms part of the ribosomal stalk which helps the ribosome interact with GTP-bound translation factors. Is thus essential for accurate translation.</text>
</comment>
<comment type="subunit">
    <text evidence="1">Homodimer. Part of the ribosomal stalk of the 50S ribosomal subunit. Forms a multimeric L10(L12)X complex, where L10 forms an elongated spine to which 2 to 4 L12 dimers bind in a sequential fashion. Binds GTP-bound translation factors.</text>
</comment>
<comment type="similarity">
    <text evidence="1">Belongs to the bacterial ribosomal protein bL12 family.</text>
</comment>
<organism>
    <name type="scientific">Dichelobacter nodosus (strain VCS1703A)</name>
    <dbReference type="NCBI Taxonomy" id="246195"/>
    <lineage>
        <taxon>Bacteria</taxon>
        <taxon>Pseudomonadati</taxon>
        <taxon>Pseudomonadota</taxon>
        <taxon>Gammaproteobacteria</taxon>
        <taxon>Cardiobacteriales</taxon>
        <taxon>Cardiobacteriaceae</taxon>
        <taxon>Dichelobacter</taxon>
    </lineage>
</organism>
<protein>
    <recommendedName>
        <fullName evidence="1">Large ribosomal subunit protein bL12</fullName>
    </recommendedName>
    <alternativeName>
        <fullName evidence="2">50S ribosomal protein L7/L12</fullName>
    </alternativeName>
</protein>
<name>RL7_DICNV</name>
<evidence type="ECO:0000255" key="1">
    <source>
        <dbReference type="HAMAP-Rule" id="MF_00368"/>
    </source>
</evidence>
<evidence type="ECO:0000305" key="2"/>
<feature type="chain" id="PRO_1000007000" description="Large ribosomal subunit protein bL12">
    <location>
        <begin position="1"/>
        <end position="122"/>
    </location>
</feature>
<proteinExistence type="inferred from homology"/>
<sequence>MAISKEDILNAISEMTVMEIVDLISAMEEKFGVTAAVAAAPVAADAAPAAEEKTEFDVILTEAGANKVAVIKVVRAVTGLGLKEAKAAVDEAPSTIKEAASKEEAEKIKKDLEEAGAKAELK</sequence>
<accession>A5EX71</accession>
<dbReference type="EMBL" id="CP000513">
    <property type="protein sequence ID" value="ABQ14340.1"/>
    <property type="molecule type" value="Genomic_DNA"/>
</dbReference>
<dbReference type="RefSeq" id="WP_012031578.1">
    <property type="nucleotide sequence ID" value="NC_009446.1"/>
</dbReference>
<dbReference type="SMR" id="A5EX71"/>
<dbReference type="STRING" id="246195.DNO_1283"/>
<dbReference type="KEGG" id="dno:DNO_1283"/>
<dbReference type="eggNOG" id="COG0222">
    <property type="taxonomic scope" value="Bacteria"/>
</dbReference>
<dbReference type="HOGENOM" id="CLU_086499_3_0_6"/>
<dbReference type="OrthoDB" id="9811748at2"/>
<dbReference type="Proteomes" id="UP000000248">
    <property type="component" value="Chromosome"/>
</dbReference>
<dbReference type="GO" id="GO:0022625">
    <property type="term" value="C:cytosolic large ribosomal subunit"/>
    <property type="evidence" value="ECO:0007669"/>
    <property type="project" value="TreeGrafter"/>
</dbReference>
<dbReference type="GO" id="GO:0003729">
    <property type="term" value="F:mRNA binding"/>
    <property type="evidence" value="ECO:0007669"/>
    <property type="project" value="TreeGrafter"/>
</dbReference>
<dbReference type="GO" id="GO:0003735">
    <property type="term" value="F:structural constituent of ribosome"/>
    <property type="evidence" value="ECO:0007669"/>
    <property type="project" value="InterPro"/>
</dbReference>
<dbReference type="GO" id="GO:0006412">
    <property type="term" value="P:translation"/>
    <property type="evidence" value="ECO:0007669"/>
    <property type="project" value="UniProtKB-UniRule"/>
</dbReference>
<dbReference type="CDD" id="cd00387">
    <property type="entry name" value="Ribosomal_L7_L12"/>
    <property type="match status" value="1"/>
</dbReference>
<dbReference type="FunFam" id="3.30.1390.10:FF:000001">
    <property type="entry name" value="50S ribosomal protein L7/L12"/>
    <property type="match status" value="1"/>
</dbReference>
<dbReference type="Gene3D" id="3.30.1390.10">
    <property type="match status" value="1"/>
</dbReference>
<dbReference type="Gene3D" id="1.20.5.710">
    <property type="entry name" value="Single helix bin"/>
    <property type="match status" value="1"/>
</dbReference>
<dbReference type="HAMAP" id="MF_00368">
    <property type="entry name" value="Ribosomal_bL12"/>
    <property type="match status" value="1"/>
</dbReference>
<dbReference type="InterPro" id="IPR000206">
    <property type="entry name" value="Ribosomal_bL12"/>
</dbReference>
<dbReference type="InterPro" id="IPR013823">
    <property type="entry name" value="Ribosomal_bL12_C"/>
</dbReference>
<dbReference type="InterPro" id="IPR014719">
    <property type="entry name" value="Ribosomal_bL12_C/ClpS-like"/>
</dbReference>
<dbReference type="InterPro" id="IPR008932">
    <property type="entry name" value="Ribosomal_bL12_oligo"/>
</dbReference>
<dbReference type="InterPro" id="IPR036235">
    <property type="entry name" value="Ribosomal_bL12_oligo_N_sf"/>
</dbReference>
<dbReference type="NCBIfam" id="TIGR00855">
    <property type="entry name" value="L12"/>
    <property type="match status" value="1"/>
</dbReference>
<dbReference type="PANTHER" id="PTHR45987">
    <property type="entry name" value="39S RIBOSOMAL PROTEIN L12"/>
    <property type="match status" value="1"/>
</dbReference>
<dbReference type="PANTHER" id="PTHR45987:SF4">
    <property type="entry name" value="LARGE RIBOSOMAL SUBUNIT PROTEIN BL12M"/>
    <property type="match status" value="1"/>
</dbReference>
<dbReference type="Pfam" id="PF00542">
    <property type="entry name" value="Ribosomal_L12"/>
    <property type="match status" value="1"/>
</dbReference>
<dbReference type="Pfam" id="PF16320">
    <property type="entry name" value="Ribosomal_L12_N"/>
    <property type="match status" value="1"/>
</dbReference>
<dbReference type="SUPFAM" id="SSF54736">
    <property type="entry name" value="ClpS-like"/>
    <property type="match status" value="1"/>
</dbReference>
<dbReference type="SUPFAM" id="SSF48300">
    <property type="entry name" value="Ribosomal protein L7/12, oligomerisation (N-terminal) domain"/>
    <property type="match status" value="1"/>
</dbReference>
<reference key="1">
    <citation type="journal article" date="2007" name="Nat. Biotechnol.">
        <title>Genome sequence and identification of candidate vaccine antigens from the animal pathogen Dichelobacter nodosus.</title>
        <authorList>
            <person name="Myers G.S.A."/>
            <person name="Parker D."/>
            <person name="Al-Hasani K."/>
            <person name="Kennan R.M."/>
            <person name="Seemann T."/>
            <person name="Ren Q."/>
            <person name="Badger J.H."/>
            <person name="Selengut J.D."/>
            <person name="Deboy R.T."/>
            <person name="Tettelin H."/>
            <person name="Boyce J.D."/>
            <person name="McCarl V.P."/>
            <person name="Han X."/>
            <person name="Nelson W.C."/>
            <person name="Madupu R."/>
            <person name="Mohamoud Y."/>
            <person name="Holley T."/>
            <person name="Fedorova N."/>
            <person name="Khouri H."/>
            <person name="Bottomley S.P."/>
            <person name="Whittington R.J."/>
            <person name="Adler B."/>
            <person name="Songer J.G."/>
            <person name="Rood J.I."/>
            <person name="Paulsen I.T."/>
        </authorList>
    </citation>
    <scope>NUCLEOTIDE SEQUENCE [LARGE SCALE GENOMIC DNA]</scope>
    <source>
        <strain>VCS1703A</strain>
    </source>
</reference>
<keyword id="KW-1185">Reference proteome</keyword>
<keyword id="KW-0687">Ribonucleoprotein</keyword>
<keyword id="KW-0689">Ribosomal protein</keyword>
<gene>
    <name evidence="1" type="primary">rplL</name>
    <name type="ordered locus">DNO_1283</name>
</gene>